<reference key="1">
    <citation type="journal article" date="2005" name="Nucleic Acids Res.">
        <title>Genome dynamics and diversity of Shigella species, the etiologic agents of bacillary dysentery.</title>
        <authorList>
            <person name="Yang F."/>
            <person name="Yang J."/>
            <person name="Zhang X."/>
            <person name="Chen L."/>
            <person name="Jiang Y."/>
            <person name="Yan Y."/>
            <person name="Tang X."/>
            <person name="Wang J."/>
            <person name="Xiong Z."/>
            <person name="Dong J."/>
            <person name="Xue Y."/>
            <person name="Zhu Y."/>
            <person name="Xu X."/>
            <person name="Sun L."/>
            <person name="Chen S."/>
            <person name="Nie H."/>
            <person name="Peng J."/>
            <person name="Xu J."/>
            <person name="Wang Y."/>
            <person name="Yuan Z."/>
            <person name="Wen Y."/>
            <person name="Yao Z."/>
            <person name="Shen Y."/>
            <person name="Qiang B."/>
            <person name="Hou Y."/>
            <person name="Yu J."/>
            <person name="Jin Q."/>
        </authorList>
    </citation>
    <scope>NUCLEOTIDE SEQUENCE [LARGE SCALE GENOMIC DNA]</scope>
    <source>
        <strain>Sd197</strain>
    </source>
</reference>
<gene>
    <name evidence="1" type="primary">glk</name>
    <name type="ordered locus">SDY_2587</name>
</gene>
<keyword id="KW-0067">ATP-binding</keyword>
<keyword id="KW-0963">Cytoplasm</keyword>
<keyword id="KW-0324">Glycolysis</keyword>
<keyword id="KW-0418">Kinase</keyword>
<keyword id="KW-0547">Nucleotide-binding</keyword>
<keyword id="KW-1185">Reference proteome</keyword>
<keyword id="KW-0808">Transferase</keyword>
<feature type="chain" id="PRO_0000268788" description="Glucokinase">
    <location>
        <begin position="1"/>
        <end position="321"/>
    </location>
</feature>
<feature type="binding site" evidence="1">
    <location>
        <begin position="8"/>
        <end position="13"/>
    </location>
    <ligand>
        <name>ATP</name>
        <dbReference type="ChEBI" id="CHEBI:30616"/>
    </ligand>
</feature>
<protein>
    <recommendedName>
        <fullName evidence="1">Glucokinase</fullName>
        <ecNumber evidence="1">2.7.1.2</ecNumber>
    </recommendedName>
    <alternativeName>
        <fullName evidence="1">Glucose kinase</fullName>
    </alternativeName>
</protein>
<name>GLK_SHIDS</name>
<accession>Q32DF7</accession>
<comment type="catalytic activity">
    <reaction evidence="1">
        <text>D-glucose + ATP = D-glucose 6-phosphate + ADP + H(+)</text>
        <dbReference type="Rhea" id="RHEA:17825"/>
        <dbReference type="ChEBI" id="CHEBI:4167"/>
        <dbReference type="ChEBI" id="CHEBI:15378"/>
        <dbReference type="ChEBI" id="CHEBI:30616"/>
        <dbReference type="ChEBI" id="CHEBI:61548"/>
        <dbReference type="ChEBI" id="CHEBI:456216"/>
        <dbReference type="EC" id="2.7.1.2"/>
    </reaction>
</comment>
<comment type="subcellular location">
    <subcellularLocation>
        <location evidence="1">Cytoplasm</location>
    </subcellularLocation>
</comment>
<comment type="similarity">
    <text evidence="1">Belongs to the bacterial glucokinase family.</text>
</comment>
<dbReference type="EC" id="2.7.1.2" evidence="1"/>
<dbReference type="EMBL" id="CP000034">
    <property type="protein sequence ID" value="ABB62648.1"/>
    <property type="molecule type" value="Genomic_DNA"/>
</dbReference>
<dbReference type="RefSeq" id="WP_000170345.1">
    <property type="nucleotide sequence ID" value="NC_007606.1"/>
</dbReference>
<dbReference type="RefSeq" id="YP_404139.1">
    <property type="nucleotide sequence ID" value="NC_007606.1"/>
</dbReference>
<dbReference type="SMR" id="Q32DF7"/>
<dbReference type="STRING" id="300267.SDY_2587"/>
<dbReference type="EnsemblBacteria" id="ABB62648">
    <property type="protein sequence ID" value="ABB62648"/>
    <property type="gene ID" value="SDY_2587"/>
</dbReference>
<dbReference type="KEGG" id="sdy:SDY_2587"/>
<dbReference type="PATRIC" id="fig|300267.13.peg.3121"/>
<dbReference type="HOGENOM" id="CLU_042582_1_0_6"/>
<dbReference type="Proteomes" id="UP000002716">
    <property type="component" value="Chromosome"/>
</dbReference>
<dbReference type="GO" id="GO:0005829">
    <property type="term" value="C:cytosol"/>
    <property type="evidence" value="ECO:0007669"/>
    <property type="project" value="TreeGrafter"/>
</dbReference>
<dbReference type="GO" id="GO:0005524">
    <property type="term" value="F:ATP binding"/>
    <property type="evidence" value="ECO:0007669"/>
    <property type="project" value="UniProtKB-UniRule"/>
</dbReference>
<dbReference type="GO" id="GO:0005536">
    <property type="term" value="F:D-glucose binding"/>
    <property type="evidence" value="ECO:0007669"/>
    <property type="project" value="InterPro"/>
</dbReference>
<dbReference type="GO" id="GO:0004340">
    <property type="term" value="F:glucokinase activity"/>
    <property type="evidence" value="ECO:0007669"/>
    <property type="project" value="UniProtKB-UniRule"/>
</dbReference>
<dbReference type="GO" id="GO:0006096">
    <property type="term" value="P:glycolytic process"/>
    <property type="evidence" value="ECO:0007669"/>
    <property type="project" value="UniProtKB-UniRule"/>
</dbReference>
<dbReference type="CDD" id="cd24008">
    <property type="entry name" value="ASKHA_NBD_GLK"/>
    <property type="match status" value="1"/>
</dbReference>
<dbReference type="FunFam" id="3.30.420.40:FF:000045">
    <property type="entry name" value="Glucokinase"/>
    <property type="match status" value="1"/>
</dbReference>
<dbReference type="FunFam" id="3.40.367.20:FF:000002">
    <property type="entry name" value="Glucokinase"/>
    <property type="match status" value="1"/>
</dbReference>
<dbReference type="Gene3D" id="3.30.420.40">
    <property type="match status" value="1"/>
</dbReference>
<dbReference type="Gene3D" id="3.40.367.20">
    <property type="match status" value="1"/>
</dbReference>
<dbReference type="HAMAP" id="MF_00524">
    <property type="entry name" value="Glucokinase"/>
    <property type="match status" value="1"/>
</dbReference>
<dbReference type="InterPro" id="IPR043129">
    <property type="entry name" value="ATPase_NBD"/>
</dbReference>
<dbReference type="InterPro" id="IPR050201">
    <property type="entry name" value="Bacterial_glucokinase"/>
</dbReference>
<dbReference type="InterPro" id="IPR003836">
    <property type="entry name" value="Glucokinase"/>
</dbReference>
<dbReference type="NCBIfam" id="TIGR00749">
    <property type="entry name" value="glk"/>
    <property type="match status" value="1"/>
</dbReference>
<dbReference type="NCBIfam" id="NF001414">
    <property type="entry name" value="PRK00292.1-1"/>
    <property type="match status" value="1"/>
</dbReference>
<dbReference type="NCBIfam" id="NF001416">
    <property type="entry name" value="PRK00292.1-3"/>
    <property type="match status" value="1"/>
</dbReference>
<dbReference type="PANTHER" id="PTHR47690">
    <property type="entry name" value="GLUCOKINASE"/>
    <property type="match status" value="1"/>
</dbReference>
<dbReference type="PANTHER" id="PTHR47690:SF1">
    <property type="entry name" value="GLUCOKINASE"/>
    <property type="match status" value="1"/>
</dbReference>
<dbReference type="Pfam" id="PF02685">
    <property type="entry name" value="Glucokinase"/>
    <property type="match status" value="1"/>
</dbReference>
<dbReference type="SUPFAM" id="SSF53067">
    <property type="entry name" value="Actin-like ATPase domain"/>
    <property type="match status" value="1"/>
</dbReference>
<organism>
    <name type="scientific">Shigella dysenteriae serotype 1 (strain Sd197)</name>
    <dbReference type="NCBI Taxonomy" id="300267"/>
    <lineage>
        <taxon>Bacteria</taxon>
        <taxon>Pseudomonadati</taxon>
        <taxon>Pseudomonadota</taxon>
        <taxon>Gammaproteobacteria</taxon>
        <taxon>Enterobacterales</taxon>
        <taxon>Enterobacteriaceae</taxon>
        <taxon>Shigella</taxon>
    </lineage>
</organism>
<sequence length="321" mass="34697">MTKYALVGDVGGTNARLALCDIASGEISQAKTYSGLDYPSLEAVIRVYLEEHKVEVKDGCIAIACPITGDWVAMTNHTWAFSIAEMKKNLGFSHLEIINDFTAVSMAIPMLKKEHLIQFGGAEPVEGKPIAVYGAGTGLGVAHLVHVDKRWVSLPGEGGHVDFAPNSEEEAIILEILRAEIGHVSAERVLSGPGLVNLYRAIVKADNRLPENLKPKDITERALADSCTDCRRALSLFCVIMGRFGGNLALNLGTFGGVFIAGGIVPRFLEFFKASGFRAAFEDKGRFKEYVHDIPVYLIVHDNAGLLGSGAHLRQTLGHIL</sequence>
<proteinExistence type="inferred from homology"/>
<evidence type="ECO:0000255" key="1">
    <source>
        <dbReference type="HAMAP-Rule" id="MF_00524"/>
    </source>
</evidence>